<proteinExistence type="inferred from homology"/>
<keyword id="KW-0963">Cytoplasm</keyword>
<keyword id="KW-0690">Ribosome biogenesis</keyword>
<comment type="function">
    <text evidence="1">Required for maturation of 30S ribosomal subunits.</text>
</comment>
<comment type="subcellular location">
    <subcellularLocation>
        <location evidence="1">Cytoplasm</location>
    </subcellularLocation>
</comment>
<comment type="similarity">
    <text evidence="1">Belongs to the RimP family.</text>
</comment>
<name>RIMP_RICCN</name>
<sequence>MQTIEQQIANVIEESLTDMGFELVLVKFKGVNPKVVEILIDSLNSEKISVEDCTKASRTISAILDVEDLIEAAYSLEVASSGLERPLVKFENYNRFLEREVKIKLKELLNGKTRYQGKIIKAENNKIYLKCEEQEVLIDYDLIKNANLVLTEEVFKKLLKQ</sequence>
<dbReference type="EMBL" id="AE006914">
    <property type="protein sequence ID" value="AAL03356.1"/>
    <property type="molecule type" value="Genomic_DNA"/>
</dbReference>
<dbReference type="PIR" id="B97802">
    <property type="entry name" value="B97802"/>
</dbReference>
<dbReference type="RefSeq" id="WP_010977427.1">
    <property type="nucleotide sequence ID" value="NC_003103.1"/>
</dbReference>
<dbReference type="SMR" id="Q92HF3"/>
<dbReference type="GeneID" id="927780"/>
<dbReference type="KEGG" id="rco:RC0818"/>
<dbReference type="HOGENOM" id="CLU_070525_0_2_5"/>
<dbReference type="Proteomes" id="UP000000816">
    <property type="component" value="Chromosome"/>
</dbReference>
<dbReference type="GO" id="GO:0005829">
    <property type="term" value="C:cytosol"/>
    <property type="evidence" value="ECO:0007669"/>
    <property type="project" value="TreeGrafter"/>
</dbReference>
<dbReference type="GO" id="GO:0000028">
    <property type="term" value="P:ribosomal small subunit assembly"/>
    <property type="evidence" value="ECO:0007669"/>
    <property type="project" value="TreeGrafter"/>
</dbReference>
<dbReference type="GO" id="GO:0006412">
    <property type="term" value="P:translation"/>
    <property type="evidence" value="ECO:0007669"/>
    <property type="project" value="TreeGrafter"/>
</dbReference>
<dbReference type="CDD" id="cd01734">
    <property type="entry name" value="YlxS_C"/>
    <property type="match status" value="1"/>
</dbReference>
<dbReference type="Gene3D" id="2.30.30.180">
    <property type="entry name" value="Ribosome maturation factor RimP, C-terminal domain"/>
    <property type="match status" value="1"/>
</dbReference>
<dbReference type="Gene3D" id="3.30.300.70">
    <property type="entry name" value="RimP-like superfamily, N-terminal"/>
    <property type="match status" value="1"/>
</dbReference>
<dbReference type="HAMAP" id="MF_01077">
    <property type="entry name" value="RimP"/>
    <property type="match status" value="1"/>
</dbReference>
<dbReference type="InterPro" id="IPR003728">
    <property type="entry name" value="Ribosome_maturation_RimP"/>
</dbReference>
<dbReference type="InterPro" id="IPR028998">
    <property type="entry name" value="RimP_C"/>
</dbReference>
<dbReference type="InterPro" id="IPR036847">
    <property type="entry name" value="RimP_C_sf"/>
</dbReference>
<dbReference type="InterPro" id="IPR028989">
    <property type="entry name" value="RimP_N"/>
</dbReference>
<dbReference type="InterPro" id="IPR035956">
    <property type="entry name" value="RimP_N_sf"/>
</dbReference>
<dbReference type="NCBIfam" id="NF000937">
    <property type="entry name" value="PRK00092.4-3"/>
    <property type="match status" value="1"/>
</dbReference>
<dbReference type="PANTHER" id="PTHR33867">
    <property type="entry name" value="RIBOSOME MATURATION FACTOR RIMP"/>
    <property type="match status" value="1"/>
</dbReference>
<dbReference type="PANTHER" id="PTHR33867:SF1">
    <property type="entry name" value="RIBOSOME MATURATION FACTOR RIMP"/>
    <property type="match status" value="1"/>
</dbReference>
<dbReference type="Pfam" id="PF17384">
    <property type="entry name" value="DUF150_C"/>
    <property type="match status" value="1"/>
</dbReference>
<dbReference type="Pfam" id="PF02576">
    <property type="entry name" value="RimP_N"/>
    <property type="match status" value="1"/>
</dbReference>
<dbReference type="SUPFAM" id="SSF74942">
    <property type="entry name" value="YhbC-like, C-terminal domain"/>
    <property type="match status" value="1"/>
</dbReference>
<dbReference type="SUPFAM" id="SSF75420">
    <property type="entry name" value="YhbC-like, N-terminal domain"/>
    <property type="match status" value="1"/>
</dbReference>
<gene>
    <name evidence="1" type="primary">rimP</name>
    <name type="ordered locus">RC0818</name>
</gene>
<protein>
    <recommendedName>
        <fullName evidence="1">Ribosome maturation factor RimP</fullName>
    </recommendedName>
</protein>
<reference key="1">
    <citation type="journal article" date="2001" name="Science">
        <title>Mechanisms of evolution in Rickettsia conorii and R. prowazekii.</title>
        <authorList>
            <person name="Ogata H."/>
            <person name="Audic S."/>
            <person name="Renesto-Audiffren P."/>
            <person name="Fournier P.-E."/>
            <person name="Barbe V."/>
            <person name="Samson D."/>
            <person name="Roux V."/>
            <person name="Cossart P."/>
            <person name="Weissenbach J."/>
            <person name="Claverie J.-M."/>
            <person name="Raoult D."/>
        </authorList>
    </citation>
    <scope>NUCLEOTIDE SEQUENCE [LARGE SCALE GENOMIC DNA]</scope>
    <source>
        <strain>ATCC VR-613 / Malish 7</strain>
    </source>
</reference>
<feature type="chain" id="PRO_0000181913" description="Ribosome maturation factor RimP">
    <location>
        <begin position="1"/>
        <end position="161"/>
    </location>
</feature>
<organism>
    <name type="scientific">Rickettsia conorii (strain ATCC VR-613 / Malish 7)</name>
    <dbReference type="NCBI Taxonomy" id="272944"/>
    <lineage>
        <taxon>Bacteria</taxon>
        <taxon>Pseudomonadati</taxon>
        <taxon>Pseudomonadota</taxon>
        <taxon>Alphaproteobacteria</taxon>
        <taxon>Rickettsiales</taxon>
        <taxon>Rickettsiaceae</taxon>
        <taxon>Rickettsieae</taxon>
        <taxon>Rickettsia</taxon>
        <taxon>spotted fever group</taxon>
    </lineage>
</organism>
<accession>Q92HF3</accession>
<evidence type="ECO:0000255" key="1">
    <source>
        <dbReference type="HAMAP-Rule" id="MF_01077"/>
    </source>
</evidence>